<sequence length="197" mass="21502">MKLIVGMTGATCAPLGVALLQALREMPNVETHLVMSKWAKTTIELETPYSARDVAALADFSHNPADQAAIISSGSFRTDGMIVIPCSMKTLAGIRAGYADGLVGRAADVVLKEGRKLVLVPREMPLSTIHLENMLALSRMGVAMVPPMPAFYNHPETVDDIVHHVVARVLDQFGLEHPHARRWQGLPQARNFSQENE</sequence>
<accession>P69773</accession>
<accession>Q9X728</accession>
<evidence type="ECO:0000255" key="1">
    <source>
        <dbReference type="HAMAP-Rule" id="MF_01986"/>
    </source>
</evidence>
<protein>
    <recommendedName>
        <fullName evidence="1">Probable UbiX-like flavin prenyltransferase</fullName>
        <ecNumber evidence="1">2.5.1.129</ecNumber>
    </recommendedName>
    <alternativeName>
        <fullName evidence="1">4-hydroxybenzoate decarboxylase subunit B</fullName>
    </alternativeName>
    <alternativeName>
        <fullName evidence="1">Phenolic acid decarboxylase subunit B</fullName>
    </alternativeName>
</protein>
<keyword id="KW-0285">Flavoprotein</keyword>
<keyword id="KW-0288">FMN</keyword>
<keyword id="KW-0637">Prenyltransferase</keyword>
<keyword id="KW-0808">Transferase</keyword>
<proteinExistence type="inferred from homology"/>
<name>PADL_ECO11</name>
<comment type="function">
    <text evidence="1">Flavin prenyltransferase that catalyzes the synthesis of the prenylated FMN cofactor (prenyl-FMN) for phenolic acid decarboxylase C. Involved in the decarboxylation and detoxification of phenolic derivatives under both aerobic and anaerobic conditions.</text>
</comment>
<comment type="catalytic activity">
    <reaction evidence="1">
        <text>dimethylallyl phosphate + FMNH2 = prenylated FMNH2 + phosphate</text>
        <dbReference type="Rhea" id="RHEA:37743"/>
        <dbReference type="ChEBI" id="CHEBI:43474"/>
        <dbReference type="ChEBI" id="CHEBI:57618"/>
        <dbReference type="ChEBI" id="CHEBI:87467"/>
        <dbReference type="ChEBI" id="CHEBI:88052"/>
        <dbReference type="EC" id="2.5.1.129"/>
    </reaction>
</comment>
<comment type="subunit">
    <text evidence="1">Homododecamer.</text>
</comment>
<comment type="similarity">
    <text evidence="1">Belongs to the UbiX/PAD1 family. YclB subfamily.</text>
</comment>
<dbReference type="EC" id="2.5.1.129" evidence="1"/>
<dbReference type="EMBL" id="AF242208">
    <property type="protein sequence ID" value="AAG14973.1"/>
    <property type="molecule type" value="Genomic_DNA"/>
</dbReference>
<dbReference type="SMR" id="P69773"/>
<dbReference type="GO" id="GO:0016831">
    <property type="term" value="F:carboxy-lyase activity"/>
    <property type="evidence" value="ECO:0007669"/>
    <property type="project" value="TreeGrafter"/>
</dbReference>
<dbReference type="GO" id="GO:0106141">
    <property type="term" value="F:flavin prenyltransferase activity"/>
    <property type="evidence" value="ECO:0007669"/>
    <property type="project" value="UniProtKB-EC"/>
</dbReference>
<dbReference type="FunFam" id="3.40.50.1950:FF:000001">
    <property type="entry name" value="Flavin prenyltransferase UbiX"/>
    <property type="match status" value="1"/>
</dbReference>
<dbReference type="Gene3D" id="3.40.50.1950">
    <property type="entry name" value="Flavin prenyltransferase-like"/>
    <property type="match status" value="1"/>
</dbReference>
<dbReference type="HAMAP" id="MF_01984">
    <property type="entry name" value="ubiX_pad"/>
    <property type="match status" value="1"/>
</dbReference>
<dbReference type="HAMAP" id="MF_01986">
    <property type="entry name" value="ubiX_pad_yclB"/>
    <property type="match status" value="1"/>
</dbReference>
<dbReference type="InterPro" id="IPR036551">
    <property type="entry name" value="Flavin_trans-like"/>
</dbReference>
<dbReference type="InterPro" id="IPR003382">
    <property type="entry name" value="Flavoprotein"/>
</dbReference>
<dbReference type="InterPro" id="IPR004507">
    <property type="entry name" value="UbiX-like"/>
</dbReference>
<dbReference type="InterPro" id="IPR032901">
    <property type="entry name" value="UbiX_pad_YclB"/>
</dbReference>
<dbReference type="NCBIfam" id="NF004685">
    <property type="entry name" value="PRK06029.1"/>
    <property type="match status" value="1"/>
</dbReference>
<dbReference type="NCBIfam" id="TIGR00421">
    <property type="entry name" value="ubiX_pad"/>
    <property type="match status" value="1"/>
</dbReference>
<dbReference type="NCBIfam" id="NF041206">
    <property type="entry name" value="VdcB"/>
    <property type="match status" value="1"/>
</dbReference>
<dbReference type="PANTHER" id="PTHR43374">
    <property type="entry name" value="FLAVIN PRENYLTRANSFERASE"/>
    <property type="match status" value="1"/>
</dbReference>
<dbReference type="PANTHER" id="PTHR43374:SF1">
    <property type="entry name" value="FLAVIN PRENYLTRANSFERASE PAD1, MITOCHONDRIAL"/>
    <property type="match status" value="1"/>
</dbReference>
<dbReference type="Pfam" id="PF02441">
    <property type="entry name" value="Flavoprotein"/>
    <property type="match status" value="1"/>
</dbReference>
<dbReference type="SUPFAM" id="SSF52507">
    <property type="entry name" value="Homo-oligomeric flavin-containing Cys decarboxylases, HFCD"/>
    <property type="match status" value="1"/>
</dbReference>
<gene>
    <name type="primary">ecdB</name>
    <name type="synonym">pad1</name>
</gene>
<feature type="chain" id="PRO_0000134964" description="Probable UbiX-like flavin prenyltransferase">
    <location>
        <begin position="1"/>
        <end position="197"/>
    </location>
</feature>
<feature type="binding site" evidence="1">
    <location>
        <begin position="9"/>
        <end position="11"/>
    </location>
    <ligand>
        <name>FMN</name>
        <dbReference type="ChEBI" id="CHEBI:58210"/>
    </ligand>
</feature>
<feature type="binding site" evidence="1">
    <location>
        <position position="36"/>
    </location>
    <ligand>
        <name>FMN</name>
        <dbReference type="ChEBI" id="CHEBI:58210"/>
    </ligand>
</feature>
<feature type="binding site" evidence="1">
    <location>
        <begin position="87"/>
        <end position="90"/>
    </location>
    <ligand>
        <name>FMN</name>
        <dbReference type="ChEBI" id="CHEBI:58210"/>
    </ligand>
</feature>
<feature type="binding site" evidence="1">
    <location>
        <position position="122"/>
    </location>
    <ligand>
        <name>FMN</name>
        <dbReference type="ChEBI" id="CHEBI:58210"/>
    </ligand>
</feature>
<organism>
    <name type="scientific">Escherichia coli O111:H-</name>
    <dbReference type="NCBI Taxonomy" id="168927"/>
    <lineage>
        <taxon>Bacteria</taxon>
        <taxon>Pseudomonadati</taxon>
        <taxon>Pseudomonadota</taxon>
        <taxon>Gammaproteobacteria</taxon>
        <taxon>Enterobacterales</taxon>
        <taxon>Enterobacteriaceae</taxon>
        <taxon>Escherichia</taxon>
    </lineage>
</organism>
<reference key="1">
    <citation type="journal article" date="2000" name="J. Bacteriol.">
        <title>Gene conservation and loss in the mutS-rpoS genomic region of pathogenic Escherichia coli.</title>
        <authorList>
            <person name="Herbelin C.J."/>
            <person name="Chirillo S.C."/>
            <person name="Melnick K.A."/>
            <person name="Whittam T.S."/>
        </authorList>
    </citation>
    <scope>NUCLEOTIDE SEQUENCE [GENOMIC DNA]</scope>
    <source>
        <strain>O111:H- / DEC 12e / EPEC</strain>
    </source>
</reference>